<comment type="function">
    <text evidence="1">Responsible for synthesis of pseudouridine from uracil-55 in the psi GC loop of transfer RNAs.</text>
</comment>
<comment type="catalytic activity">
    <reaction evidence="1">
        <text>uridine(55) in tRNA = pseudouridine(55) in tRNA</text>
        <dbReference type="Rhea" id="RHEA:42532"/>
        <dbReference type="Rhea" id="RHEA-COMP:10101"/>
        <dbReference type="Rhea" id="RHEA-COMP:10102"/>
        <dbReference type="ChEBI" id="CHEBI:65314"/>
        <dbReference type="ChEBI" id="CHEBI:65315"/>
        <dbReference type="EC" id="5.4.99.25"/>
    </reaction>
</comment>
<comment type="similarity">
    <text evidence="1">Belongs to the pseudouridine synthase TruB family. Type 1 subfamily.</text>
</comment>
<name>TRUB_UREU1</name>
<feature type="chain" id="PRO_1000136821" description="tRNA pseudouridine synthase B">
    <location>
        <begin position="1"/>
        <end position="229"/>
    </location>
</feature>
<feature type="active site" description="Nucleophile" evidence="1">
    <location>
        <position position="42"/>
    </location>
</feature>
<gene>
    <name evidence="1" type="primary">truB</name>
    <name type="ordered locus">UUR10_0361</name>
</gene>
<keyword id="KW-0413">Isomerase</keyword>
<keyword id="KW-0819">tRNA processing</keyword>
<sequence>MYTINKNIIVINKPINWTSNDVVQKVKRIIKAKKVGHAGTLDPNASGILVLGINEGTKLLTKLTLDSKTYVAEIQFGISTNTYDSTGEIISKINKFITLTEIESAIENLYKNEYWQKPPKFSALKINGKKAYELARNNISFEIEPRLVKIFEYNILDFNYEKQILKIIIKVSKGFYVRSFAVDLAARINNLAHLLSLVRTESGQFSINDAIEIEQVYDYWNNINKHSTN</sequence>
<accession>B5ZBG4</accession>
<proteinExistence type="inferred from homology"/>
<organism>
    <name type="scientific">Ureaplasma urealyticum serovar 10 (strain ATCC 33699 / Western)</name>
    <dbReference type="NCBI Taxonomy" id="565575"/>
    <lineage>
        <taxon>Bacteria</taxon>
        <taxon>Bacillati</taxon>
        <taxon>Mycoplasmatota</taxon>
        <taxon>Mycoplasmoidales</taxon>
        <taxon>Mycoplasmoidaceae</taxon>
        <taxon>Ureaplasma</taxon>
    </lineage>
</organism>
<protein>
    <recommendedName>
        <fullName evidence="1">tRNA pseudouridine synthase B</fullName>
        <ecNumber evidence="1">5.4.99.25</ecNumber>
    </recommendedName>
    <alternativeName>
        <fullName evidence="1">tRNA pseudouridine(55) synthase</fullName>
        <shortName evidence="1">Psi55 synthase</shortName>
    </alternativeName>
    <alternativeName>
        <fullName evidence="1">tRNA pseudouridylate synthase</fullName>
    </alternativeName>
    <alternativeName>
        <fullName evidence="1">tRNA-uridine isomerase</fullName>
    </alternativeName>
</protein>
<dbReference type="EC" id="5.4.99.25" evidence="1"/>
<dbReference type="EMBL" id="CP001184">
    <property type="protein sequence ID" value="ACI59812.1"/>
    <property type="molecule type" value="Genomic_DNA"/>
</dbReference>
<dbReference type="RefSeq" id="WP_004026154.1">
    <property type="nucleotide sequence ID" value="NC_011374.1"/>
</dbReference>
<dbReference type="SMR" id="B5ZBG4"/>
<dbReference type="STRING" id="565575.UUR10_0361"/>
<dbReference type="GeneID" id="93848838"/>
<dbReference type="KEGG" id="uue:UUR10_0361"/>
<dbReference type="eggNOG" id="COG0130">
    <property type="taxonomic scope" value="Bacteria"/>
</dbReference>
<dbReference type="HOGENOM" id="CLU_032087_2_0_14"/>
<dbReference type="OrthoDB" id="9802309at2"/>
<dbReference type="Proteomes" id="UP000002018">
    <property type="component" value="Chromosome"/>
</dbReference>
<dbReference type="GO" id="GO:0003723">
    <property type="term" value="F:RNA binding"/>
    <property type="evidence" value="ECO:0007669"/>
    <property type="project" value="InterPro"/>
</dbReference>
<dbReference type="GO" id="GO:0160148">
    <property type="term" value="F:tRNA pseudouridine(55) synthase activity"/>
    <property type="evidence" value="ECO:0007669"/>
    <property type="project" value="UniProtKB-EC"/>
</dbReference>
<dbReference type="GO" id="GO:1990481">
    <property type="term" value="P:mRNA pseudouridine synthesis"/>
    <property type="evidence" value="ECO:0007669"/>
    <property type="project" value="TreeGrafter"/>
</dbReference>
<dbReference type="GO" id="GO:0031119">
    <property type="term" value="P:tRNA pseudouridine synthesis"/>
    <property type="evidence" value="ECO:0007669"/>
    <property type="project" value="UniProtKB-UniRule"/>
</dbReference>
<dbReference type="CDD" id="cd02573">
    <property type="entry name" value="PseudoU_synth_EcTruB"/>
    <property type="match status" value="1"/>
</dbReference>
<dbReference type="Gene3D" id="3.30.2350.10">
    <property type="entry name" value="Pseudouridine synthase"/>
    <property type="match status" value="1"/>
</dbReference>
<dbReference type="HAMAP" id="MF_01080">
    <property type="entry name" value="TruB_bact"/>
    <property type="match status" value="1"/>
</dbReference>
<dbReference type="InterPro" id="IPR020103">
    <property type="entry name" value="PsdUridine_synth_cat_dom_sf"/>
</dbReference>
<dbReference type="InterPro" id="IPR002501">
    <property type="entry name" value="PsdUridine_synth_N"/>
</dbReference>
<dbReference type="InterPro" id="IPR014780">
    <property type="entry name" value="tRNA_psdUridine_synth_TruB"/>
</dbReference>
<dbReference type="NCBIfam" id="TIGR00431">
    <property type="entry name" value="TruB"/>
    <property type="match status" value="1"/>
</dbReference>
<dbReference type="PANTHER" id="PTHR13767:SF2">
    <property type="entry name" value="PSEUDOURIDYLATE SYNTHASE TRUB1"/>
    <property type="match status" value="1"/>
</dbReference>
<dbReference type="PANTHER" id="PTHR13767">
    <property type="entry name" value="TRNA-PSEUDOURIDINE SYNTHASE"/>
    <property type="match status" value="1"/>
</dbReference>
<dbReference type="Pfam" id="PF01509">
    <property type="entry name" value="TruB_N"/>
    <property type="match status" value="1"/>
</dbReference>
<dbReference type="SUPFAM" id="SSF55120">
    <property type="entry name" value="Pseudouridine synthase"/>
    <property type="match status" value="1"/>
</dbReference>
<reference key="1">
    <citation type="submission" date="2008-10" db="EMBL/GenBank/DDBJ databases">
        <title>Genome sequence of Ureaplasma urealyticum serovar 10 ATCC-33699.</title>
        <authorList>
            <person name="Shrivastava S."/>
            <person name="Methe B.A."/>
            <person name="Glass J."/>
            <person name="White K."/>
            <person name="Duffy L.B."/>
        </authorList>
    </citation>
    <scope>NUCLEOTIDE SEQUENCE [LARGE SCALE GENOMIC DNA]</scope>
    <source>
        <strain>ATCC 33699 / Western</strain>
    </source>
</reference>
<evidence type="ECO:0000255" key="1">
    <source>
        <dbReference type="HAMAP-Rule" id="MF_01080"/>
    </source>
</evidence>